<keyword id="KW-0007">Acetylation</keyword>
<keyword id="KW-0024">Alternative initiation</keyword>
<keyword id="KW-0025">Alternative splicing</keyword>
<keyword id="KW-1166">Caveolin-mediated endocytosis of virus by host</keyword>
<keyword id="KW-1170">Fusion of virus membrane with host endosomal membrane</keyword>
<keyword id="KW-1168">Fusion of virus membrane with host membrane</keyword>
<keyword id="KW-0325">Glycoprotein</keyword>
<keyword id="KW-0945">Host-virus interaction</keyword>
<keyword id="KW-0449">Lipoprotein</keyword>
<keyword id="KW-0472">Membrane</keyword>
<keyword id="KW-0519">Myristate</keyword>
<keyword id="KW-0812">Transmembrane</keyword>
<keyword id="KW-1133">Transmembrane helix</keyword>
<keyword id="KW-1161">Viral attachment to host cell</keyword>
<keyword id="KW-0261">Viral envelope protein</keyword>
<keyword id="KW-1162">Viral penetration into host cytoplasm</keyword>
<keyword id="KW-0946">Virion</keyword>
<keyword id="KW-1164">Virus endocytosis by host</keyword>
<keyword id="KW-1160">Virus entry into host cell</keyword>
<accession>Q99HR4</accession>
<accession>Q99HR3</accession>
<accession>Q99HR7</accession>
<comment type="function">
    <text evidence="3">The large envelope protein exists in two topological conformations, one which is termed 'external' or Le-HBsAg and the other 'internal' or Li-HBsAg. In its external conformation the protein attaches the virus to cell receptors and thereby initiating infection. This interaction determines the species specificity and liver tropism. This attachment induces virion internalization predominantly through caveolin-mediated endocytosis. The large envelope protein also assures fusion between virion membrane and endosomal membrane. In its internal conformation the protein plays a role in virion morphogenesis and mediates the contact with the nucleocapsid like a matrix protein.</text>
</comment>
<comment type="function">
    <text evidence="3">The middle envelope protein plays an important role in the budding of the virion. It is involved in the induction of budding in a nucleocapsid independent way. In this process the majority of envelope proteins bud to form subviral lipoprotein particles of 22 nm of diameter that do not contain a nucleocapsid.</text>
</comment>
<comment type="subunit">
    <molecule>Isoform L</molecule>
    <text evidence="2">In its internal form (Li-HBsAg), interacts with the capsid protein and with the isoform S. Interacts with host chaperone CANX.</text>
</comment>
<comment type="subunit">
    <molecule>Isoform M</molecule>
    <text evidence="2">Associates with host chaperone CANX through its pre-S2 N glycan; this association may be essential for isoform M proper secretion.</text>
</comment>
<comment type="subunit">
    <molecule>Isoform S</molecule>
    <text evidence="2">Interacts with isoform L. Interacts with the antigens of satellite virus HDV (HDVAgs); this interaction is required for encapsidation of HDV genomic RNA.</text>
</comment>
<comment type="subcellular location">
    <subcellularLocation>
        <location evidence="3">Virion membrane</location>
    </subcellularLocation>
</comment>
<comment type="alternative products">
    <event type="alternative splicing"/>
    <event type="alternative initiation"/>
    <isoform>
        <id>Q99HR4-1</id>
        <name>L</name>
        <name>Large envelope protein</name>
        <name>LHB</name>
        <name>L-HBsAg</name>
        <sequence type="displayed"/>
    </isoform>
    <isoform>
        <id>Q99HR4-2</id>
        <name>M</name>
        <name>Middle envelope protein</name>
        <name>MHB</name>
        <name>M-HBsAg</name>
        <sequence type="described" ref="VSP_031424"/>
    </isoform>
    <isoform>
        <id>Q99HR4-3</id>
        <name>S</name>
        <name>Small envelope protein</name>
        <name>SHB</name>
        <name>S-HBsAg</name>
        <sequence type="described" ref="VSP_031423"/>
    </isoform>
</comment>
<comment type="domain">
    <text evidence="3">The large envelope protein is synthesized with the pre-S region at the cytosolic side of the endoplasmic reticulum and, hence will be within the virion after budding. Therefore the pre-S region is not N-glycosylated. Later a post-translational translocation of N-terminal pre-S and TM1 domains occur in about 50% of proteins at the virion surface. These molecules change their topology by an unknown mechanism, resulting in exposure of pre-S region at virion surface. For isoform M in contrast, the pre-S2 region is translocated cotranslationally to the endoplasmic reticulum lumen and is N-glycosylated.</text>
</comment>
<comment type="PTM">
    <text evidence="1 3">Isoform M is N-terminally acetylated by host at a ratio of 90%, and N-glycosylated by host at the pre-S2 region.</text>
</comment>
<comment type="PTM">
    <text evidence="3">Myristoylated.</text>
</comment>
<comment type="biotechnology">
    <text>Systematic vaccination of individuals at risk of exposure to the virus has been the main method of controlling the morbidity and mortality associated with hepatitis B. The first hepatitis B vaccine was manufactured by the purification and inactivation of HBsAg obtained from the plasma of chronic hepatitis B virus carriers. The vaccine is now produced by recombinant DNA techniques and expression of the S isoform in yeast cells. The pre-S region do not seem to induce strong enough antigenic response.</text>
</comment>
<comment type="similarity">
    <text evidence="3">Belongs to the orthohepadnavirus major surface antigen family.</text>
</comment>
<comment type="sequence caution" evidence="5">
    <conflict type="erroneous initiation">
        <sequence resource="EMBL-CDS" id="AAG49736"/>
    </conflict>
</comment>
<comment type="sequence caution" evidence="5">
    <conflict type="erroneous initiation">
        <sequence resource="EMBL-CDS" id="AAG49737"/>
    </conflict>
</comment>
<name>HBSAG_HBVF4</name>
<evidence type="ECO:0000250" key="1">
    <source>
        <dbReference type="UniProtKB" id="P03138"/>
    </source>
</evidence>
<evidence type="ECO:0000250" key="2">
    <source>
        <dbReference type="UniProtKB" id="P03141"/>
    </source>
</evidence>
<evidence type="ECO:0000255" key="3">
    <source>
        <dbReference type="HAMAP-Rule" id="MF_04075"/>
    </source>
</evidence>
<evidence type="ECO:0000256" key="4">
    <source>
        <dbReference type="SAM" id="MobiDB-lite"/>
    </source>
</evidence>
<evidence type="ECO:0000305" key="5"/>
<dbReference type="EMBL" id="AF223965">
    <property type="protein sequence ID" value="AAG49734.1"/>
    <property type="molecule type" value="Genomic_DNA"/>
</dbReference>
<dbReference type="EMBL" id="AF223965">
    <property type="protein sequence ID" value="AAG49736.1"/>
    <property type="status" value="ALT_INIT"/>
    <property type="molecule type" value="Genomic_DNA"/>
</dbReference>
<dbReference type="EMBL" id="AF223965">
    <property type="protein sequence ID" value="AAG49737.1"/>
    <property type="status" value="ALT_INIT"/>
    <property type="molecule type" value="Genomic_DNA"/>
</dbReference>
<dbReference type="PIR" id="JQ2119">
    <property type="entry name" value="JQ2119"/>
</dbReference>
<dbReference type="PIR" id="JQ2120">
    <property type="entry name" value="JQ2120"/>
</dbReference>
<dbReference type="PIR" id="JQ2121">
    <property type="entry name" value="JQ2121"/>
</dbReference>
<dbReference type="PIR" id="JQ2122">
    <property type="entry name" value="JQ2122"/>
</dbReference>
<dbReference type="SMR" id="Q99HR4"/>
<dbReference type="GlyCosmos" id="Q99HR4">
    <property type="glycosylation" value="2 sites, No reported glycans"/>
</dbReference>
<dbReference type="Proteomes" id="UP000008031">
    <property type="component" value="Segment"/>
</dbReference>
<dbReference type="GO" id="GO:0016020">
    <property type="term" value="C:membrane"/>
    <property type="evidence" value="ECO:0007669"/>
    <property type="project" value="UniProtKB-UniRule"/>
</dbReference>
<dbReference type="GO" id="GO:0019031">
    <property type="term" value="C:viral envelope"/>
    <property type="evidence" value="ECO:0007669"/>
    <property type="project" value="UniProtKB-KW"/>
</dbReference>
<dbReference type="GO" id="GO:0055036">
    <property type="term" value="C:virion membrane"/>
    <property type="evidence" value="ECO:0007669"/>
    <property type="project" value="UniProtKB-SubCell"/>
</dbReference>
<dbReference type="GO" id="GO:0075513">
    <property type="term" value="P:caveolin-mediated endocytosis of virus by host cell"/>
    <property type="evidence" value="ECO:0007669"/>
    <property type="project" value="UniProtKB-KW"/>
</dbReference>
<dbReference type="GO" id="GO:0039654">
    <property type="term" value="P:fusion of virus membrane with host endosome membrane"/>
    <property type="evidence" value="ECO:0007669"/>
    <property type="project" value="UniProtKB-KW"/>
</dbReference>
<dbReference type="GO" id="GO:0019062">
    <property type="term" value="P:virion attachment to host cell"/>
    <property type="evidence" value="ECO:0007669"/>
    <property type="project" value="UniProtKB-UniRule"/>
</dbReference>
<dbReference type="HAMAP" id="MF_04075">
    <property type="entry name" value="HBV_HBSAG"/>
    <property type="match status" value="1"/>
</dbReference>
<dbReference type="InterPro" id="IPR000349">
    <property type="entry name" value="HBV_HBSAG"/>
</dbReference>
<dbReference type="Pfam" id="PF00695">
    <property type="entry name" value="vMSA"/>
    <property type="match status" value="1"/>
</dbReference>
<reference key="1">
    <citation type="journal article" date="2001" name="J. Clin. Microbiol.">
        <title>Phylogenetic origin of hepatitis B virus strains with precore C-1858 variant.</title>
        <authorList>
            <person name="Alestig E."/>
            <person name="Hannoun C."/>
            <person name="Horal P."/>
            <person name="Lindh M."/>
        </authorList>
    </citation>
    <scope>NUCLEOTIDE SEQUENCE [GENOMIC DNA]</scope>
</reference>
<reference key="2">
    <citation type="journal article" date="1996" name="Intervirology">
        <title>Functions of the large hepatitis B virus surface protein in viral particle morphogenesis.</title>
        <authorList>
            <person name="Bruss V."/>
            <person name="Gerhardt E."/>
            <person name="Vieluf K."/>
            <person name="Wunderlich G."/>
        </authorList>
    </citation>
    <scope>REVIEW</scope>
</reference>
<reference key="3">
    <citation type="journal article" date="1998" name="Adv. Exp. Med. Biol.">
        <title>Role of glycan processing in hepatitis B virus envelope protein trafficking.</title>
        <authorList>
            <person name="Block T.M."/>
            <person name="Lu X."/>
            <person name="Mehta A."/>
            <person name="Park J."/>
            <person name="Blumberg B.S."/>
            <person name="Dwek R."/>
        </authorList>
    </citation>
    <scope>REVIEW</scope>
</reference>
<reference key="4">
    <citation type="journal article" date="2004" name="Virus Res.">
        <title>Envelopment of the hepatitis B virus nucleocapsid.</title>
        <authorList>
            <person name="Bruss V."/>
        </authorList>
    </citation>
    <scope>REVIEW</scope>
</reference>
<reference key="5">
    <citation type="journal article" date="2006" name="Cancer Sci.">
        <title>Hepatitis B virus pre-S mutants, endoplasmic reticulum stress and hepatocarcinogenesis.</title>
        <authorList>
            <person name="Wang H.C."/>
            <person name="Huang W."/>
            <person name="Lai M.D."/>
            <person name="Su I.J."/>
        </authorList>
    </citation>
    <scope>REVIEW</scope>
</reference>
<sequence>MGAPLSTTRRGMGQNLSVPNPLGFFPEHQLDPLFRANSSSPDWDFNKNKDTWPMANKVGVGGYGPGFTPPHGGLLGWSPQAQGVLTTLPADPPPASTNRRSGRKPTPVSPPLRDTHPQAMQWNSTQFHQALLDPRVRALYFPAGGSSSETQNPAPTIASLTSSIFSKTGGPAMNMDSITSGLLGPLLVLQAVCFLLTKILTIPQSLDSWWTSLNFLGGLPGCPGQNSQSPTSNHLPTSCPPTCPGYRWMCLRRFIIFLFILLLCLIFLLVLLDYQGMLPVCPLIPGSTTTSTGPCKTCTTLAQGTSMFPSCCCSKPSDGNCTCIPIPSSWALGKYLWEWASARFSWLSLLVQFVQWCVGLSPTVWLLVIWMIWYWGPNLCSILSPFIPLLPIFCYLWVSI</sequence>
<gene>
    <name evidence="3" type="primary">S</name>
</gene>
<feature type="initiator methionine" description="Removed; by host" evidence="3">
    <location>
        <position position="1"/>
    </location>
</feature>
<feature type="chain" id="PRO_0000319093" description="Large envelope protein" evidence="3">
    <location>
        <begin position="2"/>
        <end position="400"/>
    </location>
</feature>
<feature type="topological domain" description="Intravirion; in internal conformation" evidence="3">
    <location>
        <begin position="2"/>
        <end position="253"/>
    </location>
</feature>
<feature type="topological domain" description="Virion surface; in external conformation" evidence="3">
    <location>
        <begin position="2"/>
        <end position="181"/>
    </location>
</feature>
<feature type="transmembrane region" description="Helical; Name=TM1; Note=In external conformation" evidence="3">
    <location>
        <begin position="182"/>
        <end position="202"/>
    </location>
</feature>
<feature type="topological domain" description="Intravirion; in external conformation" evidence="3">
    <location>
        <begin position="203"/>
        <end position="253"/>
    </location>
</feature>
<feature type="transmembrane region" description="Helical; Name=TM2" evidence="3">
    <location>
        <begin position="254"/>
        <end position="274"/>
    </location>
</feature>
<feature type="topological domain" description="Virion surface" evidence="3">
    <location>
        <begin position="275"/>
        <end position="348"/>
    </location>
</feature>
<feature type="transmembrane region" description="Helical" evidence="3">
    <location>
        <begin position="349"/>
        <end position="369"/>
    </location>
</feature>
<feature type="topological domain" description="Intravirion" evidence="3">
    <location>
        <begin position="370"/>
        <end position="375"/>
    </location>
</feature>
<feature type="transmembrane region" description="Helical; Name=TM3" evidence="3">
    <location>
        <begin position="376"/>
        <end position="398"/>
    </location>
</feature>
<feature type="topological domain" description="Virion surface" evidence="3">
    <location>
        <begin position="399"/>
        <end position="400"/>
    </location>
</feature>
<feature type="region of interest" description="Pre-S" evidence="3">
    <location>
        <begin position="2"/>
        <end position="174"/>
    </location>
</feature>
<feature type="region of interest" description="Pre-S1" evidence="3">
    <location>
        <begin position="2"/>
        <end position="119"/>
    </location>
</feature>
<feature type="region of interest" description="Disordered" evidence="4">
    <location>
        <begin position="84"/>
        <end position="114"/>
    </location>
</feature>
<feature type="region of interest" description="Pre-S2" evidence="3">
    <location>
        <begin position="120"/>
        <end position="174"/>
    </location>
</feature>
<feature type="lipid moiety-binding region" description="N-myristoyl glycine; by host" evidence="3">
    <location>
        <position position="2"/>
    </location>
</feature>
<feature type="glycosylation site" description="N-linked (GlcNAc...) asparagine; by host" evidence="3">
    <location>
        <position position="320"/>
    </location>
</feature>
<feature type="splice variant" id="VSP_031423" description="In isoform S." evidence="5">
    <location>
        <begin position="1"/>
        <end position="174"/>
    </location>
</feature>
<feature type="splice variant" id="VSP_031424" description="In isoform M." evidence="5">
    <location>
        <begin position="1"/>
        <end position="119"/>
    </location>
</feature>
<feature type="modified residue" description="N-acetylmethionine" evidence="5">
    <location sequence="Q99HR4-2">
        <position position="1"/>
    </location>
</feature>
<feature type="glycosylation site" description="N-linked (GlcNAc...) asparagine" evidence="5">
    <location sequence="Q99HR4-2">
        <position position="4"/>
    </location>
</feature>
<organismHost>
    <name type="scientific">Homo sapiens</name>
    <name type="common">Human</name>
    <dbReference type="NCBI Taxonomy" id="9606"/>
</organismHost>
<organismHost>
    <name type="scientific">Pan troglodytes</name>
    <name type="common">Chimpanzee</name>
    <dbReference type="NCBI Taxonomy" id="9598"/>
</organismHost>
<organism>
    <name type="scientific">Hepatitis B virus genotype F2 (isolate Argentina/sa16/2000)</name>
    <name type="common">HBV-F</name>
    <dbReference type="NCBI Taxonomy" id="489501"/>
    <lineage>
        <taxon>Viruses</taxon>
        <taxon>Riboviria</taxon>
        <taxon>Pararnavirae</taxon>
        <taxon>Artverviricota</taxon>
        <taxon>Revtraviricetes</taxon>
        <taxon>Blubervirales</taxon>
        <taxon>Hepadnaviridae</taxon>
        <taxon>Orthohepadnavirus</taxon>
        <taxon>Hepatitis B virus</taxon>
        <taxon>hepatitis B virus genotype F</taxon>
    </lineage>
</organism>
<protein>
    <recommendedName>
        <fullName evidence="3">Large envelope protein</fullName>
    </recommendedName>
    <alternativeName>
        <fullName evidence="3">L glycoprotein</fullName>
    </alternativeName>
    <alternativeName>
        <fullName evidence="3">L-HBsAg</fullName>
        <shortName evidence="3">LHB</shortName>
    </alternativeName>
    <alternativeName>
        <fullName evidence="3">Large S protein</fullName>
    </alternativeName>
    <alternativeName>
        <fullName evidence="3">Large surface protein</fullName>
    </alternativeName>
    <alternativeName>
        <fullName evidence="3">Major surface antigen</fullName>
    </alternativeName>
</protein>
<proteinExistence type="evidence at protein level"/>